<gene>
    <name type="primary">yibJ</name>
    <name type="synonym">rhsJ</name>
    <name type="ordered locus">b3595</name>
    <name type="ordered locus">JW5647</name>
</gene>
<accession>P32109</accession>
<accession>P76717</accession>
<accession>Q2M7Q8</accession>
<evidence type="ECO:0000305" key="1"/>
<feature type="chain" id="PRO_0000169607" description="Putative uncharacterized protein YibJ">
    <location>
        <begin position="1"/>
        <end position="233"/>
    </location>
</feature>
<feature type="sequence conflict" description="In Ref. 2; AAB18572." evidence="1" ref="2">
    <original>T</original>
    <variation>K</variation>
    <location>
        <position position="65"/>
    </location>
</feature>
<feature type="sequence conflict" description="In Ref. 2; AAB18572." evidence="1" ref="2">
    <original>ATA</original>
    <variation>TTE</variation>
    <location>
        <begin position="68"/>
        <end position="70"/>
    </location>
</feature>
<feature type="sequence conflict" description="In Ref. 2; AAB18572." evidence="1" ref="2">
    <original>SD</original>
    <variation>NE</variation>
    <location>
        <begin position="83"/>
        <end position="84"/>
    </location>
</feature>
<feature type="sequence conflict" description="In Ref. 2; AAB18572." evidence="1" ref="2">
    <original>H</original>
    <variation>Q</variation>
    <location>
        <position position="89"/>
    </location>
</feature>
<feature type="sequence conflict" description="In Ref. 2; AAB18572." evidence="1" ref="2">
    <original>L</original>
    <variation>Q</variation>
    <location>
        <position position="119"/>
    </location>
</feature>
<protein>
    <recommendedName>
        <fullName>Putative uncharacterized protein YibJ</fullName>
    </recommendedName>
</protein>
<name>YIBJ_ECOLI</name>
<sequence length="233" mass="26447">MQMLDRLESEILADRVSEESRRWLASCGLTVEQMKNQMDPVYTPARKIHLYHCDHRGLPLALISTEGATAWCAEYDEWGNLLSDENPHHLQQLIRLPGQQYDEESGLYYNRHRYYDPLLGRYITQDPIGLKGGWNFYQYPLNPVINVDPQGLVDINLYPESDLIHSVADEINIPGVFTIGGHGTPTSIESATRSIMTAKDLAYLIKFDGNYKDGMTVWLFSCNTGKGQNSFAS</sequence>
<comment type="similarity">
    <text evidence="1">Belongs to the RHS family.</text>
</comment>
<comment type="caution">
    <text evidence="1">Could be the product of a pseudogene.</text>
</comment>
<organism>
    <name type="scientific">Escherichia coli (strain K12)</name>
    <dbReference type="NCBI Taxonomy" id="83333"/>
    <lineage>
        <taxon>Bacteria</taxon>
        <taxon>Pseudomonadati</taxon>
        <taxon>Pseudomonadota</taxon>
        <taxon>Gammaproteobacteria</taxon>
        <taxon>Enterobacterales</taxon>
        <taxon>Enterobacteriaceae</taxon>
        <taxon>Escherichia</taxon>
    </lineage>
</organism>
<proteinExistence type="uncertain"/>
<dbReference type="EMBL" id="L19044">
    <property type="status" value="NOT_ANNOTATED_CDS"/>
    <property type="molecule type" value="Genomic_DNA"/>
</dbReference>
<dbReference type="EMBL" id="U00039">
    <property type="protein sequence ID" value="AAB18572.1"/>
    <property type="molecule type" value="Genomic_DNA"/>
</dbReference>
<dbReference type="EMBL" id="U00096">
    <property type="status" value="NOT_ANNOTATED_CDS"/>
    <property type="molecule type" value="Genomic_DNA"/>
</dbReference>
<dbReference type="EMBL" id="AP009048">
    <property type="protein sequence ID" value="BAE77698.1"/>
    <property type="molecule type" value="Genomic_DNA"/>
</dbReference>
<dbReference type="PIR" id="E65159">
    <property type="entry name" value="E65159"/>
</dbReference>
<dbReference type="SMR" id="P32109"/>
<dbReference type="BioGRID" id="4261668">
    <property type="interactions" value="91"/>
</dbReference>
<dbReference type="FunCoup" id="P32109">
    <property type="interactions" value="4"/>
</dbReference>
<dbReference type="KEGG" id="ecj:JW5647"/>
<dbReference type="EchoBASE" id="EB1716"/>
<dbReference type="eggNOG" id="COG3209">
    <property type="taxonomic scope" value="Bacteria"/>
</dbReference>
<dbReference type="HOGENOM" id="CLU_001218_4_12_6"/>
<dbReference type="InParanoid" id="P32109"/>
<dbReference type="PhylomeDB" id="P32109"/>
<dbReference type="Proteomes" id="UP000000625">
    <property type="component" value="Chromosome"/>
</dbReference>
<dbReference type="Gene3D" id="2.180.10.10">
    <property type="entry name" value="RHS repeat-associated core"/>
    <property type="match status" value="1"/>
</dbReference>
<dbReference type="InterPro" id="IPR001826">
    <property type="entry name" value="RHS"/>
</dbReference>
<dbReference type="InterPro" id="IPR022385">
    <property type="entry name" value="Rhs_assc_core"/>
</dbReference>
<dbReference type="InterPro" id="IPR050708">
    <property type="entry name" value="T6SS_VgrG/RHS"/>
</dbReference>
<dbReference type="NCBIfam" id="TIGR03696">
    <property type="entry name" value="Rhs_assc_core"/>
    <property type="match status" value="1"/>
</dbReference>
<dbReference type="PANTHER" id="PTHR32305">
    <property type="match status" value="1"/>
</dbReference>
<dbReference type="PANTHER" id="PTHR32305:SF15">
    <property type="entry name" value="PROTEIN RHSA-RELATED"/>
    <property type="match status" value="1"/>
</dbReference>
<dbReference type="Pfam" id="PF03527">
    <property type="entry name" value="RHS"/>
    <property type="match status" value="1"/>
</dbReference>
<dbReference type="PRINTS" id="PR00394">
    <property type="entry name" value="RHSPROTEIN"/>
</dbReference>
<keyword id="KW-1185">Reference proteome</keyword>
<reference key="1">
    <citation type="journal article" date="1993" name="J. Bacteriol.">
        <title>Rhs elements of Escherichia coli K-12: complex composites of shared and unique components that have different evolutionary histories.</title>
        <authorList>
            <person name="Zhao S."/>
            <person name="Sandt C.H."/>
            <person name="Feulner G."/>
            <person name="Vlazny D.A."/>
            <person name="Gray J.A."/>
            <person name="Hill C.W."/>
        </authorList>
    </citation>
    <scope>NUCLEOTIDE SEQUENCE [GENOMIC DNA]</scope>
    <source>
        <strain>K12</strain>
    </source>
</reference>
<reference key="2">
    <citation type="journal article" date="1994" name="Nucleic Acids Res.">
        <title>Analysis of the Escherichia coli genome. V. DNA sequence of the region from 76.0 to 81.5 minutes.</title>
        <authorList>
            <person name="Sofia H.J."/>
            <person name="Burland V."/>
            <person name="Daniels D.L."/>
            <person name="Plunkett G. III"/>
            <person name="Blattner F.R."/>
        </authorList>
    </citation>
    <scope>NUCLEOTIDE SEQUENCE [LARGE SCALE GENOMIC DNA]</scope>
    <source>
        <strain>K12 / MG1655 / ATCC 47076</strain>
    </source>
</reference>
<reference key="3">
    <citation type="journal article" date="1997" name="Science">
        <title>The complete genome sequence of Escherichia coli K-12.</title>
        <authorList>
            <person name="Blattner F.R."/>
            <person name="Plunkett G. III"/>
            <person name="Bloch C.A."/>
            <person name="Perna N.T."/>
            <person name="Burland V."/>
            <person name="Riley M."/>
            <person name="Collado-Vides J."/>
            <person name="Glasner J.D."/>
            <person name="Rode C.K."/>
            <person name="Mayhew G.F."/>
            <person name="Gregor J."/>
            <person name="Davis N.W."/>
            <person name="Kirkpatrick H.A."/>
            <person name="Goeden M.A."/>
            <person name="Rose D.J."/>
            <person name="Mau B."/>
            <person name="Shao Y."/>
        </authorList>
    </citation>
    <scope>NUCLEOTIDE SEQUENCE [LARGE SCALE GENOMIC DNA]</scope>
    <source>
        <strain>K12 / MG1655 / ATCC 47076</strain>
    </source>
</reference>
<reference key="4">
    <citation type="journal article" date="2006" name="Nucleic Acids Res.">
        <title>Escherichia coli K-12: a cooperatively developed annotation snapshot -- 2005.</title>
        <authorList>
            <person name="Riley M."/>
            <person name="Abe T."/>
            <person name="Arnaud M.B."/>
            <person name="Berlyn M.K.B."/>
            <person name="Blattner F.R."/>
            <person name="Chaudhuri R.R."/>
            <person name="Glasner J.D."/>
            <person name="Horiuchi T."/>
            <person name="Keseler I.M."/>
            <person name="Kosuge T."/>
            <person name="Mori H."/>
            <person name="Perna N.T."/>
            <person name="Plunkett G. III"/>
            <person name="Rudd K.E."/>
            <person name="Serres M.H."/>
            <person name="Thomas G.H."/>
            <person name="Thomson N.R."/>
            <person name="Wishart D."/>
            <person name="Wanner B.L."/>
        </authorList>
    </citation>
    <scope>SEQUENCE REVISION</scope>
</reference>
<reference key="5">
    <citation type="journal article" date="2006" name="Mol. Syst. Biol.">
        <title>Highly accurate genome sequences of Escherichia coli K-12 strains MG1655 and W3110.</title>
        <authorList>
            <person name="Hayashi K."/>
            <person name="Morooka N."/>
            <person name="Yamamoto Y."/>
            <person name="Fujita K."/>
            <person name="Isono K."/>
            <person name="Choi S."/>
            <person name="Ohtsubo E."/>
            <person name="Baba T."/>
            <person name="Wanner B.L."/>
            <person name="Mori H."/>
            <person name="Horiuchi T."/>
        </authorList>
    </citation>
    <scope>NUCLEOTIDE SEQUENCE [LARGE SCALE GENOMIC DNA]</scope>
    <source>
        <strain>K12 / W3110 / ATCC 27325 / DSM 5911</strain>
    </source>
</reference>